<protein>
    <recommendedName>
        <fullName evidence="1">UPF0597 protein YhaM</fullName>
    </recommendedName>
</protein>
<dbReference type="EMBL" id="FM200053">
    <property type="protein sequence ID" value="CAR61148.1"/>
    <property type="molecule type" value="Genomic_DNA"/>
</dbReference>
<dbReference type="RefSeq" id="WP_000463072.1">
    <property type="nucleotide sequence ID" value="NC_011147.1"/>
</dbReference>
<dbReference type="SMR" id="B5BGF2"/>
<dbReference type="KEGG" id="sek:SSPA2900"/>
<dbReference type="HOGENOM" id="CLU_051840_0_0_6"/>
<dbReference type="Proteomes" id="UP000001869">
    <property type="component" value="Chromosome"/>
</dbReference>
<dbReference type="GO" id="GO:0080146">
    <property type="term" value="F:L-cysteine desulfhydrase activity"/>
    <property type="evidence" value="ECO:0007669"/>
    <property type="project" value="TreeGrafter"/>
</dbReference>
<dbReference type="GO" id="GO:0019450">
    <property type="term" value="P:L-cysteine catabolic process to pyruvate"/>
    <property type="evidence" value="ECO:0007669"/>
    <property type="project" value="TreeGrafter"/>
</dbReference>
<dbReference type="HAMAP" id="MF_01845">
    <property type="entry name" value="UPF0597"/>
    <property type="match status" value="1"/>
</dbReference>
<dbReference type="InterPro" id="IPR005130">
    <property type="entry name" value="Ser_deHydtase-like_asu"/>
</dbReference>
<dbReference type="InterPro" id="IPR021144">
    <property type="entry name" value="UPF0597"/>
</dbReference>
<dbReference type="PANTHER" id="PTHR30501">
    <property type="entry name" value="UPF0597 PROTEIN YHAM"/>
    <property type="match status" value="1"/>
</dbReference>
<dbReference type="PANTHER" id="PTHR30501:SF2">
    <property type="entry name" value="UPF0597 PROTEIN YHAM"/>
    <property type="match status" value="1"/>
</dbReference>
<dbReference type="Pfam" id="PF03313">
    <property type="entry name" value="SDH_alpha"/>
    <property type="match status" value="1"/>
</dbReference>
<dbReference type="PIRSF" id="PIRSF006054">
    <property type="entry name" value="UCP006054"/>
    <property type="match status" value="1"/>
</dbReference>
<organism>
    <name type="scientific">Salmonella paratyphi A (strain AKU_12601)</name>
    <dbReference type="NCBI Taxonomy" id="554290"/>
    <lineage>
        <taxon>Bacteria</taxon>
        <taxon>Pseudomonadati</taxon>
        <taxon>Pseudomonadota</taxon>
        <taxon>Gammaproteobacteria</taxon>
        <taxon>Enterobacterales</taxon>
        <taxon>Enterobacteriaceae</taxon>
        <taxon>Salmonella</taxon>
    </lineage>
</organism>
<name>YHAM_SALPK</name>
<comment type="similarity">
    <text evidence="1">Belongs to the UPF0597 family.</text>
</comment>
<reference key="1">
    <citation type="journal article" date="2009" name="BMC Genomics">
        <title>Pseudogene accumulation in the evolutionary histories of Salmonella enterica serovars Paratyphi A and Typhi.</title>
        <authorList>
            <person name="Holt K.E."/>
            <person name="Thomson N.R."/>
            <person name="Wain J."/>
            <person name="Langridge G.C."/>
            <person name="Hasan R."/>
            <person name="Bhutta Z.A."/>
            <person name="Quail M.A."/>
            <person name="Norbertczak H."/>
            <person name="Walker D."/>
            <person name="Simmonds M."/>
            <person name="White B."/>
            <person name="Bason N."/>
            <person name="Mungall K."/>
            <person name="Dougan G."/>
            <person name="Parkhill J."/>
        </authorList>
    </citation>
    <scope>NUCLEOTIDE SEQUENCE [LARGE SCALE GENOMIC DNA]</scope>
    <source>
        <strain>AKU_12601</strain>
    </source>
</reference>
<evidence type="ECO:0000255" key="1">
    <source>
        <dbReference type="HAMAP-Rule" id="MF_01845"/>
    </source>
</evidence>
<accession>B5BGF2</accession>
<sequence>MFESKINPLWQSFILAVQEEVKPALGCTEPISLALAAAAAAAELDGTVERIDAWVSPNLMKNGMGVTVPGTGMVGLPIAAALGALGGDAKAGLEVLKDASAKAVADAKAMLAAGHVAVMLQEPCNDILFSRAKVYSGDSWACVTIVGDHTNIVRIETDKGVVFTQADNAQEEEKTSPLGVLSHTSLEEILAFVNAVPFDAIRFILDAARLNGALSQEGLRGSWGLHIGSTLVKQCDRGLLAKDLSTAILIRTSAASDARMGGATLPAMSNSGSGNQGITATVPVMVVAEHVGADDECLARALMLSHLSAIYIHHQLPRLSALCAATTAAMGAAAGMAWLIDGRYDTIAMAISSMIGDVSGMICDGASNSCAMKVSISASAAWKAVLMALDDTAVTGNEGIVAHNVEQSISNLCSLACRSMQQTDKQIIEIMASKAH</sequence>
<proteinExistence type="inferred from homology"/>
<gene>
    <name evidence="1" type="primary">yhaM</name>
    <name type="ordered locus">SSPA2900</name>
</gene>
<feature type="chain" id="PRO_1000188470" description="UPF0597 protein YhaM">
    <location>
        <begin position="1"/>
        <end position="436"/>
    </location>
</feature>